<reference key="1">
    <citation type="journal article" date="2009" name="PLoS Genet.">
        <title>Organised genome dynamics in the Escherichia coli species results in highly diverse adaptive paths.</title>
        <authorList>
            <person name="Touchon M."/>
            <person name="Hoede C."/>
            <person name="Tenaillon O."/>
            <person name="Barbe V."/>
            <person name="Baeriswyl S."/>
            <person name="Bidet P."/>
            <person name="Bingen E."/>
            <person name="Bonacorsi S."/>
            <person name="Bouchier C."/>
            <person name="Bouvet O."/>
            <person name="Calteau A."/>
            <person name="Chiapello H."/>
            <person name="Clermont O."/>
            <person name="Cruveiller S."/>
            <person name="Danchin A."/>
            <person name="Diard M."/>
            <person name="Dossat C."/>
            <person name="Karoui M.E."/>
            <person name="Frapy E."/>
            <person name="Garry L."/>
            <person name="Ghigo J.M."/>
            <person name="Gilles A.M."/>
            <person name="Johnson J."/>
            <person name="Le Bouguenec C."/>
            <person name="Lescat M."/>
            <person name="Mangenot S."/>
            <person name="Martinez-Jehanne V."/>
            <person name="Matic I."/>
            <person name="Nassif X."/>
            <person name="Oztas S."/>
            <person name="Petit M.A."/>
            <person name="Pichon C."/>
            <person name="Rouy Z."/>
            <person name="Ruf C.S."/>
            <person name="Schneider D."/>
            <person name="Tourret J."/>
            <person name="Vacherie B."/>
            <person name="Vallenet D."/>
            <person name="Medigue C."/>
            <person name="Rocha E.P.C."/>
            <person name="Denamur E."/>
        </authorList>
    </citation>
    <scope>NUCLEOTIDE SEQUENCE [LARGE SCALE GENOMIC DNA]</scope>
    <source>
        <strain>IAI39 / ExPEC</strain>
    </source>
</reference>
<feature type="chain" id="PRO_1000190801" description="Lipoprotein signal peptidase">
    <location>
        <begin position="1"/>
        <end position="164"/>
    </location>
</feature>
<feature type="transmembrane region" description="Helical" evidence="1">
    <location>
        <begin position="12"/>
        <end position="32"/>
    </location>
</feature>
<feature type="transmembrane region" description="Helical" evidence="1">
    <location>
        <begin position="70"/>
        <end position="90"/>
    </location>
</feature>
<feature type="transmembrane region" description="Helical" evidence="1">
    <location>
        <begin position="102"/>
        <end position="122"/>
    </location>
</feature>
<feature type="transmembrane region" description="Helical" evidence="1">
    <location>
        <begin position="137"/>
        <end position="157"/>
    </location>
</feature>
<feature type="active site" evidence="1">
    <location>
        <position position="123"/>
    </location>
</feature>
<feature type="active site" evidence="1">
    <location>
        <position position="141"/>
    </location>
</feature>
<proteinExistence type="inferred from homology"/>
<gene>
    <name evidence="1" type="primary">lspA</name>
    <name type="ordered locus">ECIAI39_0028</name>
</gene>
<comment type="function">
    <text evidence="1">This protein specifically catalyzes the removal of signal peptides from prolipoproteins.</text>
</comment>
<comment type="catalytic activity">
    <reaction evidence="1">
        <text>Release of signal peptides from bacterial membrane prolipoproteins. Hydrolyzes -Xaa-Yaa-Zaa-|-(S,diacylglyceryl)Cys-, in which Xaa is hydrophobic (preferably Leu), and Yaa (Ala or Ser) and Zaa (Gly or Ala) have small, neutral side chains.</text>
        <dbReference type="EC" id="3.4.23.36"/>
    </reaction>
</comment>
<comment type="pathway">
    <text evidence="1">Protein modification; lipoprotein biosynthesis (signal peptide cleavage).</text>
</comment>
<comment type="subcellular location">
    <subcellularLocation>
        <location evidence="1">Cell inner membrane</location>
        <topology evidence="1">Multi-pass membrane protein</topology>
    </subcellularLocation>
</comment>
<comment type="similarity">
    <text evidence="1">Belongs to the peptidase A8 family.</text>
</comment>
<protein>
    <recommendedName>
        <fullName evidence="1">Lipoprotein signal peptidase</fullName>
        <ecNumber evidence="1">3.4.23.36</ecNumber>
    </recommendedName>
    <alternativeName>
        <fullName evidence="1">Prolipoprotein signal peptidase</fullName>
    </alternativeName>
    <alternativeName>
        <fullName evidence="1">Signal peptidase II</fullName>
        <shortName evidence="1">SPase II</shortName>
    </alternativeName>
</protein>
<sequence>MSQSICSTGLRWLWLVVVVLIIDLGSKYLILQNFALGDTVPLFPSLNLHYARNYGAAFSFLADSGGWQRWFFAGIAIGISVILAVMMYRSKATQKLNNIAYALIIGGALGNLFDRLWHGFVVDMIDFYVGDWHFATFNLADTAICVGAALIVLEGFLPSKAKKQ</sequence>
<keyword id="KW-0064">Aspartyl protease</keyword>
<keyword id="KW-0997">Cell inner membrane</keyword>
<keyword id="KW-1003">Cell membrane</keyword>
<keyword id="KW-0378">Hydrolase</keyword>
<keyword id="KW-0472">Membrane</keyword>
<keyword id="KW-0645">Protease</keyword>
<keyword id="KW-0812">Transmembrane</keyword>
<keyword id="KW-1133">Transmembrane helix</keyword>
<evidence type="ECO:0000255" key="1">
    <source>
        <dbReference type="HAMAP-Rule" id="MF_00161"/>
    </source>
</evidence>
<dbReference type="EC" id="3.4.23.36" evidence="1"/>
<dbReference type="EMBL" id="CU928164">
    <property type="protein sequence ID" value="CAR16169.1"/>
    <property type="molecule type" value="Genomic_DNA"/>
</dbReference>
<dbReference type="RefSeq" id="WP_000083369.1">
    <property type="nucleotide sequence ID" value="NC_011750.1"/>
</dbReference>
<dbReference type="RefSeq" id="YP_002406076.1">
    <property type="nucleotide sequence ID" value="NC_011750.1"/>
</dbReference>
<dbReference type="SMR" id="B7NHD1"/>
<dbReference type="STRING" id="585057.ECIAI39_0028"/>
<dbReference type="MEROPS" id="A08.001"/>
<dbReference type="GeneID" id="75169926"/>
<dbReference type="KEGG" id="ect:ECIAI39_0028"/>
<dbReference type="PATRIC" id="fig|585057.6.peg.29"/>
<dbReference type="HOGENOM" id="CLU_083252_4_0_6"/>
<dbReference type="UniPathway" id="UPA00665"/>
<dbReference type="Proteomes" id="UP000000749">
    <property type="component" value="Chromosome"/>
</dbReference>
<dbReference type="GO" id="GO:0005886">
    <property type="term" value="C:plasma membrane"/>
    <property type="evidence" value="ECO:0007669"/>
    <property type="project" value="UniProtKB-SubCell"/>
</dbReference>
<dbReference type="GO" id="GO:0004190">
    <property type="term" value="F:aspartic-type endopeptidase activity"/>
    <property type="evidence" value="ECO:0007669"/>
    <property type="project" value="UniProtKB-UniRule"/>
</dbReference>
<dbReference type="GO" id="GO:0006508">
    <property type="term" value="P:proteolysis"/>
    <property type="evidence" value="ECO:0007669"/>
    <property type="project" value="UniProtKB-KW"/>
</dbReference>
<dbReference type="HAMAP" id="MF_00161">
    <property type="entry name" value="LspA"/>
    <property type="match status" value="1"/>
</dbReference>
<dbReference type="InterPro" id="IPR001872">
    <property type="entry name" value="Peptidase_A8"/>
</dbReference>
<dbReference type="NCBIfam" id="TIGR00077">
    <property type="entry name" value="lspA"/>
    <property type="match status" value="1"/>
</dbReference>
<dbReference type="PANTHER" id="PTHR33695">
    <property type="entry name" value="LIPOPROTEIN SIGNAL PEPTIDASE"/>
    <property type="match status" value="1"/>
</dbReference>
<dbReference type="PANTHER" id="PTHR33695:SF1">
    <property type="entry name" value="LIPOPROTEIN SIGNAL PEPTIDASE"/>
    <property type="match status" value="1"/>
</dbReference>
<dbReference type="Pfam" id="PF01252">
    <property type="entry name" value="Peptidase_A8"/>
    <property type="match status" value="1"/>
</dbReference>
<dbReference type="PRINTS" id="PR00781">
    <property type="entry name" value="LIPOSIGPTASE"/>
</dbReference>
<dbReference type="PROSITE" id="PS00855">
    <property type="entry name" value="SPASE_II"/>
    <property type="match status" value="1"/>
</dbReference>
<name>LSPA_ECO7I</name>
<accession>B7NHD1</accession>
<organism>
    <name type="scientific">Escherichia coli O7:K1 (strain IAI39 / ExPEC)</name>
    <dbReference type="NCBI Taxonomy" id="585057"/>
    <lineage>
        <taxon>Bacteria</taxon>
        <taxon>Pseudomonadati</taxon>
        <taxon>Pseudomonadota</taxon>
        <taxon>Gammaproteobacteria</taxon>
        <taxon>Enterobacterales</taxon>
        <taxon>Enterobacteriaceae</taxon>
        <taxon>Escherichia</taxon>
    </lineage>
</organism>